<evidence type="ECO:0000255" key="1">
    <source>
        <dbReference type="HAMAP-Rule" id="MF_01357"/>
    </source>
</evidence>
<evidence type="ECO:0000256" key="2">
    <source>
        <dbReference type="SAM" id="MobiDB-lite"/>
    </source>
</evidence>
<dbReference type="EC" id="7.1.1.-" evidence="1"/>
<dbReference type="EMBL" id="CP000157">
    <property type="protein sequence ID" value="ABC63429.1"/>
    <property type="molecule type" value="Genomic_DNA"/>
</dbReference>
<dbReference type="RefSeq" id="WP_011414265.1">
    <property type="nucleotide sequence ID" value="NC_007722.1"/>
</dbReference>
<dbReference type="SMR" id="Q2NA62"/>
<dbReference type="STRING" id="314225.ELI_06685"/>
<dbReference type="KEGG" id="eli:ELI_06685"/>
<dbReference type="eggNOG" id="COG0852">
    <property type="taxonomic scope" value="Bacteria"/>
</dbReference>
<dbReference type="HOGENOM" id="CLU_042628_2_0_5"/>
<dbReference type="OrthoDB" id="9803286at2"/>
<dbReference type="Proteomes" id="UP000008808">
    <property type="component" value="Chromosome"/>
</dbReference>
<dbReference type="GO" id="GO:0005886">
    <property type="term" value="C:plasma membrane"/>
    <property type="evidence" value="ECO:0007669"/>
    <property type="project" value="UniProtKB-SubCell"/>
</dbReference>
<dbReference type="GO" id="GO:0008137">
    <property type="term" value="F:NADH dehydrogenase (ubiquinone) activity"/>
    <property type="evidence" value="ECO:0007669"/>
    <property type="project" value="InterPro"/>
</dbReference>
<dbReference type="GO" id="GO:0050136">
    <property type="term" value="F:NADH:ubiquinone reductase (non-electrogenic) activity"/>
    <property type="evidence" value="ECO:0007669"/>
    <property type="project" value="UniProtKB-UniRule"/>
</dbReference>
<dbReference type="GO" id="GO:0048038">
    <property type="term" value="F:quinone binding"/>
    <property type="evidence" value="ECO:0007669"/>
    <property type="project" value="UniProtKB-KW"/>
</dbReference>
<dbReference type="Gene3D" id="3.30.460.80">
    <property type="entry name" value="NADH:ubiquinone oxidoreductase, 30kDa subunit"/>
    <property type="match status" value="1"/>
</dbReference>
<dbReference type="HAMAP" id="MF_01357">
    <property type="entry name" value="NDH1_NuoC"/>
    <property type="match status" value="1"/>
</dbReference>
<dbReference type="InterPro" id="IPR010218">
    <property type="entry name" value="NADH_DH_suC"/>
</dbReference>
<dbReference type="InterPro" id="IPR037232">
    <property type="entry name" value="NADH_quin_OxRdtase_su_C/D-like"/>
</dbReference>
<dbReference type="InterPro" id="IPR001268">
    <property type="entry name" value="NADH_UbQ_OxRdtase_30kDa_su"/>
</dbReference>
<dbReference type="NCBIfam" id="TIGR01961">
    <property type="entry name" value="NuoC_fam"/>
    <property type="match status" value="1"/>
</dbReference>
<dbReference type="NCBIfam" id="NF004733">
    <property type="entry name" value="PRK06074.1-5"/>
    <property type="match status" value="1"/>
</dbReference>
<dbReference type="PANTHER" id="PTHR10884:SF14">
    <property type="entry name" value="NADH DEHYDROGENASE [UBIQUINONE] IRON-SULFUR PROTEIN 3, MITOCHONDRIAL"/>
    <property type="match status" value="1"/>
</dbReference>
<dbReference type="PANTHER" id="PTHR10884">
    <property type="entry name" value="NADH DEHYDROGENASE UBIQUINONE IRON-SULFUR PROTEIN 3"/>
    <property type="match status" value="1"/>
</dbReference>
<dbReference type="Pfam" id="PF00329">
    <property type="entry name" value="Complex1_30kDa"/>
    <property type="match status" value="1"/>
</dbReference>
<dbReference type="SUPFAM" id="SSF143243">
    <property type="entry name" value="Nqo5-like"/>
    <property type="match status" value="1"/>
</dbReference>
<protein>
    <recommendedName>
        <fullName evidence="1">NADH-quinone oxidoreductase subunit C</fullName>
        <ecNumber evidence="1">7.1.1.-</ecNumber>
    </recommendedName>
    <alternativeName>
        <fullName evidence="1">NADH dehydrogenase I subunit C</fullName>
    </alternativeName>
    <alternativeName>
        <fullName evidence="1">NDH-1 subunit C</fullName>
    </alternativeName>
</protein>
<proteinExistence type="inferred from homology"/>
<name>NUOC_ERYLH</name>
<reference key="1">
    <citation type="journal article" date="2009" name="J. Bacteriol.">
        <title>Complete genome sequence of Erythrobacter litoralis HTCC2594.</title>
        <authorList>
            <person name="Oh H.M."/>
            <person name="Giovannoni S.J."/>
            <person name="Ferriera S."/>
            <person name="Johnson J."/>
            <person name="Cho J.C."/>
        </authorList>
    </citation>
    <scope>NUCLEOTIDE SEQUENCE [LARGE SCALE GENOMIC DNA]</scope>
    <source>
        <strain>HTCC2594</strain>
    </source>
</reference>
<keyword id="KW-0997">Cell inner membrane</keyword>
<keyword id="KW-1003">Cell membrane</keyword>
<keyword id="KW-0472">Membrane</keyword>
<keyword id="KW-0520">NAD</keyword>
<keyword id="KW-0874">Quinone</keyword>
<keyword id="KW-1185">Reference proteome</keyword>
<keyword id="KW-1278">Translocase</keyword>
<keyword id="KW-0813">Transport</keyword>
<keyword id="KW-0830">Ubiquinone</keyword>
<accession>Q2NA62</accession>
<gene>
    <name evidence="1" type="primary">nuoC</name>
    <name type="ordered locus">ELI_06685</name>
</gene>
<feature type="chain" id="PRO_0000358094" description="NADH-quinone oxidoreductase subunit C">
    <location>
        <begin position="1"/>
        <end position="250"/>
    </location>
</feature>
<feature type="region of interest" description="Disordered" evidence="2">
    <location>
        <begin position="193"/>
        <end position="250"/>
    </location>
</feature>
<feature type="compositionally biased region" description="Low complexity" evidence="2">
    <location>
        <begin position="222"/>
        <end position="236"/>
    </location>
</feature>
<feature type="compositionally biased region" description="Acidic residues" evidence="2">
    <location>
        <begin position="241"/>
        <end position="250"/>
    </location>
</feature>
<comment type="function">
    <text evidence="1">NDH-1 shuttles electrons from NADH, via FMN and iron-sulfur (Fe-S) centers, to quinones in the respiratory chain. The immediate electron acceptor for the enzyme in this species is believed to be ubiquinone. Couples the redox reaction to proton translocation (for every two electrons transferred, four hydrogen ions are translocated across the cytoplasmic membrane), and thus conserves the redox energy in a proton gradient.</text>
</comment>
<comment type="catalytic activity">
    <reaction evidence="1">
        <text>a quinone + NADH + 5 H(+)(in) = a quinol + NAD(+) + 4 H(+)(out)</text>
        <dbReference type="Rhea" id="RHEA:57888"/>
        <dbReference type="ChEBI" id="CHEBI:15378"/>
        <dbReference type="ChEBI" id="CHEBI:24646"/>
        <dbReference type="ChEBI" id="CHEBI:57540"/>
        <dbReference type="ChEBI" id="CHEBI:57945"/>
        <dbReference type="ChEBI" id="CHEBI:132124"/>
    </reaction>
</comment>
<comment type="subunit">
    <text evidence="1">NDH-1 is composed of 14 different subunits. Subunits NuoB, C, D, E, F, and G constitute the peripheral sector of the complex.</text>
</comment>
<comment type="subcellular location">
    <subcellularLocation>
        <location evidence="1">Cell inner membrane</location>
        <topology evidence="1">Peripheral membrane protein</topology>
        <orientation evidence="1">Cytoplasmic side</orientation>
    </subcellularLocation>
</comment>
<comment type="similarity">
    <text evidence="1">Belongs to the complex I 30 kDa subunit family.</text>
</comment>
<organism>
    <name type="scientific">Erythrobacter litoralis (strain HTCC2594)</name>
    <dbReference type="NCBI Taxonomy" id="314225"/>
    <lineage>
        <taxon>Bacteria</taxon>
        <taxon>Pseudomonadati</taxon>
        <taxon>Pseudomonadota</taxon>
        <taxon>Alphaproteobacteria</taxon>
        <taxon>Sphingomonadales</taxon>
        <taxon>Erythrobacteraceae</taxon>
        <taxon>Erythrobacter/Porphyrobacter group</taxon>
        <taxon>Erythrobacter</taxon>
    </lineage>
</organism>
<sequence length="250" mass="28113">MAVVHSAPKYASNDGVRGTLVKALGDYVAASHEKYGEIIITVERDAIEDVLRTLRDDHDYQQLMEIAGVDYPERPERFEVVYMLLSLTKNHRVMVKVSTDEKTPVPTVTTLWPNAGWLEREVFDLYGVLFDGNTDLRRILTDYGFEGHPFRKDFPLTGYTELRYSEEEQRVVYEPVELAQDLRTFDFLSPWEGMTPPLPGDEKADMPPIDDPMVTEGPEDTGAGARANAKAAEGTPADPPAMDDEEEDDA</sequence>